<protein>
    <recommendedName>
        <fullName>Protochlorophyllide reductase, chloroplastic</fullName>
        <shortName>PCR</shortName>
        <ecNumber>1.3.1.33</ecNumber>
    </recommendedName>
    <alternativeName>
        <fullName>NADPH-protochlorophyllide oxidoreductase</fullName>
        <shortName>POR</shortName>
    </alternativeName>
</protein>
<reference key="1">
    <citation type="journal article" date="1996" name="Plant Mol. Biol.">
        <title>The pc-1 phenotype of Chlamydomonas reinhardtii results from a deletion mutation in the nuclear gene for NADPH:protochlorophyllide oxidoreductase.</title>
        <authorList>
            <person name="Li J."/>
            <person name="Timko M.P."/>
        </authorList>
    </citation>
    <scope>NUCLEOTIDE SEQUENCE [GENOMIC DNA]</scope>
    <source>
        <strain>137c / CC-125</strain>
    </source>
</reference>
<gene>
    <name type="primary">PORA</name>
    <name type="synonym">LPCR-1</name>
</gene>
<feature type="transit peptide" description="Chloroplast" evidence="1">
    <location>
        <begin position="1"/>
        <end position="57"/>
    </location>
</feature>
<feature type="chain" id="PRO_0000023290" description="Protochlorophyllide reductase, chloroplastic">
    <location>
        <begin position="58"/>
        <end position="397"/>
    </location>
</feature>
<evidence type="ECO:0000255" key="1"/>
<evidence type="ECO:0000305" key="2"/>
<organism>
    <name type="scientific">Chlamydomonas reinhardtii</name>
    <name type="common">Chlamydomonas smithii</name>
    <dbReference type="NCBI Taxonomy" id="3055"/>
    <lineage>
        <taxon>Eukaryota</taxon>
        <taxon>Viridiplantae</taxon>
        <taxon>Chlorophyta</taxon>
        <taxon>core chlorophytes</taxon>
        <taxon>Chlorophyceae</taxon>
        <taxon>CS clade</taxon>
        <taxon>Chlamydomonadales</taxon>
        <taxon>Chlamydomonadaceae</taxon>
        <taxon>Chlamydomonas</taxon>
    </lineage>
</organism>
<keyword id="KW-0149">Chlorophyll biosynthesis</keyword>
<keyword id="KW-0150">Chloroplast</keyword>
<keyword id="KW-0521">NADP</keyword>
<keyword id="KW-0560">Oxidoreductase</keyword>
<keyword id="KW-0602">Photosynthesis</keyword>
<keyword id="KW-0934">Plastid</keyword>
<keyword id="KW-0809">Transit peptide</keyword>
<dbReference type="EC" id="1.3.1.33"/>
<dbReference type="EMBL" id="U36752">
    <property type="protein sequence ID" value="AAB04951.1"/>
    <property type="molecule type" value="Genomic_DNA"/>
</dbReference>
<dbReference type="PIR" id="S71468">
    <property type="entry name" value="S71468"/>
</dbReference>
<dbReference type="RefSeq" id="XP_001689464.1">
    <property type="nucleotide sequence ID" value="XM_001689412.1"/>
</dbReference>
<dbReference type="SMR" id="Q39617"/>
<dbReference type="PaxDb" id="3055-EDP09202"/>
<dbReference type="ProMEX" id="Q39617"/>
<dbReference type="EnsemblPlants" id="PNW88126">
    <property type="protein sequence ID" value="PNW88126"/>
    <property type="gene ID" value="CHLRE_01g015350v5"/>
</dbReference>
<dbReference type="Gramene" id="PNW88126">
    <property type="protein sequence ID" value="PNW88126"/>
    <property type="gene ID" value="CHLRE_01g015350v5"/>
</dbReference>
<dbReference type="KEGG" id="cre:CHLRE_01g015350v5"/>
<dbReference type="eggNOG" id="KOG1208">
    <property type="taxonomic scope" value="Eukaryota"/>
</dbReference>
<dbReference type="HOGENOM" id="CLU_010194_44_3_1"/>
<dbReference type="OMA" id="SKVACMM"/>
<dbReference type="OrthoDB" id="191139at2759"/>
<dbReference type="BRENDA" id="1.3.1.33">
    <property type="organism ID" value="1318"/>
</dbReference>
<dbReference type="UniPathway" id="UPA00668"/>
<dbReference type="GO" id="GO:0009507">
    <property type="term" value="C:chloroplast"/>
    <property type="evidence" value="ECO:0007669"/>
    <property type="project" value="UniProtKB-SubCell"/>
</dbReference>
<dbReference type="GO" id="GO:0016630">
    <property type="term" value="F:protochlorophyllide reductase activity"/>
    <property type="evidence" value="ECO:0007669"/>
    <property type="project" value="UniProtKB-EC"/>
</dbReference>
<dbReference type="GO" id="GO:0015995">
    <property type="term" value="P:chlorophyll biosynthetic process"/>
    <property type="evidence" value="ECO:0007669"/>
    <property type="project" value="UniProtKB-UniPathway"/>
</dbReference>
<dbReference type="GO" id="GO:0015979">
    <property type="term" value="P:photosynthesis"/>
    <property type="evidence" value="ECO:0007669"/>
    <property type="project" value="UniProtKB-KW"/>
</dbReference>
<dbReference type="CDD" id="cd09810">
    <property type="entry name" value="LPOR_like_SDR_c_like"/>
    <property type="match status" value="1"/>
</dbReference>
<dbReference type="Gene3D" id="3.40.50.720">
    <property type="entry name" value="NAD(P)-binding Rossmann-like Domain"/>
    <property type="match status" value="1"/>
</dbReference>
<dbReference type="InterPro" id="IPR036291">
    <property type="entry name" value="NAD(P)-bd_dom_sf"/>
</dbReference>
<dbReference type="InterPro" id="IPR005979">
    <property type="entry name" value="Prochl_reduct"/>
</dbReference>
<dbReference type="InterPro" id="IPR002347">
    <property type="entry name" value="SDR_fam"/>
</dbReference>
<dbReference type="NCBIfam" id="TIGR01289">
    <property type="entry name" value="LPOR"/>
    <property type="match status" value="1"/>
</dbReference>
<dbReference type="PANTHER" id="PTHR44419:SF19">
    <property type="entry name" value="PROTOCHLOROPHYLLIDE REDUCTASE A, CHLOROPLASTIC"/>
    <property type="match status" value="1"/>
</dbReference>
<dbReference type="PANTHER" id="PTHR44419">
    <property type="entry name" value="PROTOCHLOROPHYLLIDE REDUCTASE C, CHLOROPLASTIC"/>
    <property type="match status" value="1"/>
</dbReference>
<dbReference type="Pfam" id="PF00106">
    <property type="entry name" value="adh_short"/>
    <property type="match status" value="1"/>
</dbReference>
<dbReference type="PRINTS" id="PR00081">
    <property type="entry name" value="GDHRDH"/>
</dbReference>
<dbReference type="SUPFAM" id="SSF51735">
    <property type="entry name" value="NAD(P)-binding Rossmann-fold domains"/>
    <property type="match status" value="1"/>
</dbReference>
<proteinExistence type="inferred from homology"/>
<name>POR_CHLRE</name>
<comment type="function">
    <text>Phototransformation of protochlorophyllide (Pchlide) to chlorophyllide (Chlide).</text>
</comment>
<comment type="catalytic activity">
    <reaction>
        <text>chlorophyllide a + NADP(+) = protochlorophyllide a + NADPH + H(+)</text>
        <dbReference type="Rhea" id="RHEA:11132"/>
        <dbReference type="ChEBI" id="CHEBI:15378"/>
        <dbReference type="ChEBI" id="CHEBI:57783"/>
        <dbReference type="ChEBI" id="CHEBI:58349"/>
        <dbReference type="ChEBI" id="CHEBI:83348"/>
        <dbReference type="ChEBI" id="CHEBI:83350"/>
        <dbReference type="EC" id="1.3.1.33"/>
    </reaction>
</comment>
<comment type="pathway">
    <text>Porphyrin-containing compound metabolism; chlorophyll biosynthesis.</text>
</comment>
<comment type="subcellular location">
    <subcellularLocation>
        <location>Plastid</location>
        <location>Chloroplast</location>
    </subcellularLocation>
</comment>
<comment type="similarity">
    <text evidence="2">Belongs to the short-chain dehydrogenases/reductases (SDR) family. POR subfamily.</text>
</comment>
<sequence>MALTMSAKSVSARAQVSSKAQAAPAVAVSGRTSSRVMPAPALAARSSVARTPLVVCAATATAPSPSLADKFKPNAIARVPATQQKQTAIITGASSGLGLNAAKALAATGEWHVVMACRDFLKAEQAAKKVGMPAGSYSILHLDLSSLESVRQFVQNFKASGRRLDALVCNAAVYLPTAKEPRFTADGFELSVGTNHLGHFLLTNLLLDDLKNAPNKQPRCIIVGSITGNTNTLAGNVPPKANLGDLSGLAAGVPAANPMMDGQEFNGAKAYKDSKVACMMTVRQMHQRFHDATGITFASLYPGCIAETGLFREHVPLFKTLFPPFQKYITKGYVSEEEAGRRLAAVISDPKLNKSGAYWSWSSTTGSFDNQVSEEVADDSKASKLWDISAKLVGLSA</sequence>
<accession>Q39617</accession>